<organism>
    <name type="scientific">Bacillus subtilis (strain 168)</name>
    <dbReference type="NCBI Taxonomy" id="224308"/>
    <lineage>
        <taxon>Bacteria</taxon>
        <taxon>Bacillati</taxon>
        <taxon>Bacillota</taxon>
        <taxon>Bacilli</taxon>
        <taxon>Bacillales</taxon>
        <taxon>Bacillaceae</taxon>
        <taxon>Bacillus</taxon>
    </lineage>
</organism>
<sequence>MKKILLAIGALVTAVIAIGIVFSHMILFIKKKTDEDIIKRETDNGHDVFESFEQMEKTAFVIPSAYGYDIKGYHVAPHDTPNTIIICHGVTMNVLNSLKYMHLFLDLGWNVLIYDHRRHGQSGGKTTSYGFYEKDDLNKVVSLLKNKTNHRGLIGIHGESMGAVTALLYAGAHCSDGADFYIADCPFACFDEQLAYRLRAEYRLPSWPLLPIADFFLKLRGGYRAREVSPLAVIDKIEKPVLFIHSKDDDYIPVSSTERLYEKKRGPKALYIAENGEHAMSYTKNRHTYRKTVQEFLDNMNDSTE</sequence>
<name>YQKD_BACSU</name>
<dbReference type="EMBL" id="D84432">
    <property type="protein sequence ID" value="BAA12636.1"/>
    <property type="molecule type" value="Genomic_DNA"/>
</dbReference>
<dbReference type="EMBL" id="AL009126">
    <property type="protein sequence ID" value="CAB14296.1"/>
    <property type="molecule type" value="Genomic_DNA"/>
</dbReference>
<dbReference type="PIR" id="F69966">
    <property type="entry name" value="F69966"/>
</dbReference>
<dbReference type="RefSeq" id="NP_390245.1">
    <property type="nucleotide sequence ID" value="NC_000964.3"/>
</dbReference>
<dbReference type="RefSeq" id="WP_004398519.1">
    <property type="nucleotide sequence ID" value="NZ_OZ025638.1"/>
</dbReference>
<dbReference type="SMR" id="P54567"/>
<dbReference type="FunCoup" id="P54567">
    <property type="interactions" value="53"/>
</dbReference>
<dbReference type="STRING" id="224308.BSU23640"/>
<dbReference type="ESTHER" id="bacsu-yqkd">
    <property type="family name" value="AlphaBeta_hydrolase"/>
</dbReference>
<dbReference type="MEROPS" id="S09.B04"/>
<dbReference type="PaxDb" id="224308-BSU23640"/>
<dbReference type="DNASU" id="938716"/>
<dbReference type="EnsemblBacteria" id="CAB14296">
    <property type="protein sequence ID" value="CAB14296"/>
    <property type="gene ID" value="BSU_23640"/>
</dbReference>
<dbReference type="GeneID" id="938716"/>
<dbReference type="KEGG" id="bsu:BSU23640"/>
<dbReference type="PATRIC" id="fig|224308.179.peg.2577"/>
<dbReference type="eggNOG" id="COG1073">
    <property type="taxonomic scope" value="Bacteria"/>
</dbReference>
<dbReference type="InParanoid" id="P54567"/>
<dbReference type="OrthoDB" id="9776685at2"/>
<dbReference type="PhylomeDB" id="P54567"/>
<dbReference type="BioCyc" id="BSUB:BSU23640-MONOMER"/>
<dbReference type="Proteomes" id="UP000001570">
    <property type="component" value="Chromosome"/>
</dbReference>
<dbReference type="GO" id="GO:0016020">
    <property type="term" value="C:membrane"/>
    <property type="evidence" value="ECO:0007669"/>
    <property type="project" value="UniProtKB-SubCell"/>
</dbReference>
<dbReference type="Gene3D" id="3.40.50.1820">
    <property type="entry name" value="alpha/beta hydrolase"/>
    <property type="match status" value="1"/>
</dbReference>
<dbReference type="InterPro" id="IPR029058">
    <property type="entry name" value="AB_hydrolase_fold"/>
</dbReference>
<dbReference type="InterPro" id="IPR052920">
    <property type="entry name" value="DNA-binding_regulatory"/>
</dbReference>
<dbReference type="InterPro" id="IPR022742">
    <property type="entry name" value="Hydrolase_4"/>
</dbReference>
<dbReference type="PANTHER" id="PTHR43358">
    <property type="entry name" value="ALPHA/BETA-HYDROLASE"/>
    <property type="match status" value="1"/>
</dbReference>
<dbReference type="PANTHER" id="PTHR43358:SF5">
    <property type="entry name" value="EXPORTED PROTEIN"/>
    <property type="match status" value="1"/>
</dbReference>
<dbReference type="Pfam" id="PF12146">
    <property type="entry name" value="Hydrolase_4"/>
    <property type="match status" value="1"/>
</dbReference>
<dbReference type="SUPFAM" id="SSF53474">
    <property type="entry name" value="alpha/beta-Hydrolases"/>
    <property type="match status" value="1"/>
</dbReference>
<protein>
    <recommendedName>
        <fullName>Uncharacterized protein YqkD</fullName>
    </recommendedName>
</protein>
<proteinExistence type="predicted"/>
<evidence type="ECO:0000255" key="1"/>
<evidence type="ECO:0000305" key="2"/>
<comment type="subcellular location">
    <subcellularLocation>
        <location evidence="2">Membrane</location>
        <topology evidence="2">Single-pass membrane protein</topology>
    </subcellularLocation>
</comment>
<gene>
    <name type="primary">yqkD</name>
    <name type="ordered locus">BSU23640</name>
</gene>
<accession>P54567</accession>
<reference key="1">
    <citation type="journal article" date="1996" name="Microbiology">
        <title>Systematic sequencing of the 283 kb 210 degrees-232 degrees region of the Bacillus subtilis genome containing the skin element and many sporulation genes.</title>
        <authorList>
            <person name="Mizuno M."/>
            <person name="Masuda S."/>
            <person name="Takemaru K."/>
            <person name="Hosono S."/>
            <person name="Sato T."/>
            <person name="Takeuchi M."/>
            <person name="Kobayashi Y."/>
        </authorList>
    </citation>
    <scope>NUCLEOTIDE SEQUENCE [GENOMIC DNA]</scope>
    <source>
        <strain>168 / JH642</strain>
    </source>
</reference>
<reference key="2">
    <citation type="journal article" date="1997" name="Nature">
        <title>The complete genome sequence of the Gram-positive bacterium Bacillus subtilis.</title>
        <authorList>
            <person name="Kunst F."/>
            <person name="Ogasawara N."/>
            <person name="Moszer I."/>
            <person name="Albertini A.M."/>
            <person name="Alloni G."/>
            <person name="Azevedo V."/>
            <person name="Bertero M.G."/>
            <person name="Bessieres P."/>
            <person name="Bolotin A."/>
            <person name="Borchert S."/>
            <person name="Borriss R."/>
            <person name="Boursier L."/>
            <person name="Brans A."/>
            <person name="Braun M."/>
            <person name="Brignell S.C."/>
            <person name="Bron S."/>
            <person name="Brouillet S."/>
            <person name="Bruschi C.V."/>
            <person name="Caldwell B."/>
            <person name="Capuano V."/>
            <person name="Carter N.M."/>
            <person name="Choi S.-K."/>
            <person name="Codani J.-J."/>
            <person name="Connerton I.F."/>
            <person name="Cummings N.J."/>
            <person name="Daniel R.A."/>
            <person name="Denizot F."/>
            <person name="Devine K.M."/>
            <person name="Duesterhoeft A."/>
            <person name="Ehrlich S.D."/>
            <person name="Emmerson P.T."/>
            <person name="Entian K.-D."/>
            <person name="Errington J."/>
            <person name="Fabret C."/>
            <person name="Ferrari E."/>
            <person name="Foulger D."/>
            <person name="Fritz C."/>
            <person name="Fujita M."/>
            <person name="Fujita Y."/>
            <person name="Fuma S."/>
            <person name="Galizzi A."/>
            <person name="Galleron N."/>
            <person name="Ghim S.-Y."/>
            <person name="Glaser P."/>
            <person name="Goffeau A."/>
            <person name="Golightly E.J."/>
            <person name="Grandi G."/>
            <person name="Guiseppi G."/>
            <person name="Guy B.J."/>
            <person name="Haga K."/>
            <person name="Haiech J."/>
            <person name="Harwood C.R."/>
            <person name="Henaut A."/>
            <person name="Hilbert H."/>
            <person name="Holsappel S."/>
            <person name="Hosono S."/>
            <person name="Hullo M.-F."/>
            <person name="Itaya M."/>
            <person name="Jones L.-M."/>
            <person name="Joris B."/>
            <person name="Karamata D."/>
            <person name="Kasahara Y."/>
            <person name="Klaerr-Blanchard M."/>
            <person name="Klein C."/>
            <person name="Kobayashi Y."/>
            <person name="Koetter P."/>
            <person name="Koningstein G."/>
            <person name="Krogh S."/>
            <person name="Kumano M."/>
            <person name="Kurita K."/>
            <person name="Lapidus A."/>
            <person name="Lardinois S."/>
            <person name="Lauber J."/>
            <person name="Lazarevic V."/>
            <person name="Lee S.-M."/>
            <person name="Levine A."/>
            <person name="Liu H."/>
            <person name="Masuda S."/>
            <person name="Mauel C."/>
            <person name="Medigue C."/>
            <person name="Medina N."/>
            <person name="Mellado R.P."/>
            <person name="Mizuno M."/>
            <person name="Moestl D."/>
            <person name="Nakai S."/>
            <person name="Noback M."/>
            <person name="Noone D."/>
            <person name="O'Reilly M."/>
            <person name="Ogawa K."/>
            <person name="Ogiwara A."/>
            <person name="Oudega B."/>
            <person name="Park S.-H."/>
            <person name="Parro V."/>
            <person name="Pohl T.M."/>
            <person name="Portetelle D."/>
            <person name="Porwollik S."/>
            <person name="Prescott A.M."/>
            <person name="Presecan E."/>
            <person name="Pujic P."/>
            <person name="Purnelle B."/>
            <person name="Rapoport G."/>
            <person name="Rey M."/>
            <person name="Reynolds S."/>
            <person name="Rieger M."/>
            <person name="Rivolta C."/>
            <person name="Rocha E."/>
            <person name="Roche B."/>
            <person name="Rose M."/>
            <person name="Sadaie Y."/>
            <person name="Sato T."/>
            <person name="Scanlan E."/>
            <person name="Schleich S."/>
            <person name="Schroeter R."/>
            <person name="Scoffone F."/>
            <person name="Sekiguchi J."/>
            <person name="Sekowska A."/>
            <person name="Seror S.J."/>
            <person name="Serror P."/>
            <person name="Shin B.-S."/>
            <person name="Soldo B."/>
            <person name="Sorokin A."/>
            <person name="Tacconi E."/>
            <person name="Takagi T."/>
            <person name="Takahashi H."/>
            <person name="Takemaru K."/>
            <person name="Takeuchi M."/>
            <person name="Tamakoshi A."/>
            <person name="Tanaka T."/>
            <person name="Terpstra P."/>
            <person name="Tognoni A."/>
            <person name="Tosato V."/>
            <person name="Uchiyama S."/>
            <person name="Vandenbol M."/>
            <person name="Vannier F."/>
            <person name="Vassarotti A."/>
            <person name="Viari A."/>
            <person name="Wambutt R."/>
            <person name="Wedler E."/>
            <person name="Wedler H."/>
            <person name="Weitzenegger T."/>
            <person name="Winters P."/>
            <person name="Wipat A."/>
            <person name="Yamamoto H."/>
            <person name="Yamane K."/>
            <person name="Yasumoto K."/>
            <person name="Yata K."/>
            <person name="Yoshida K."/>
            <person name="Yoshikawa H.-F."/>
            <person name="Zumstein E."/>
            <person name="Yoshikawa H."/>
            <person name="Danchin A."/>
        </authorList>
    </citation>
    <scope>NUCLEOTIDE SEQUENCE [LARGE SCALE GENOMIC DNA]</scope>
    <source>
        <strain>168</strain>
    </source>
</reference>
<keyword id="KW-0472">Membrane</keyword>
<keyword id="KW-1185">Reference proteome</keyword>
<keyword id="KW-0812">Transmembrane</keyword>
<keyword id="KW-1133">Transmembrane helix</keyword>
<feature type="chain" id="PRO_0000049841" description="Uncharacterized protein YqkD">
    <location>
        <begin position="1"/>
        <end position="305"/>
    </location>
</feature>
<feature type="transmembrane region" description="Helical" evidence="1">
    <location>
        <begin position="8"/>
        <end position="28"/>
    </location>
</feature>